<name>RL25_PSEAB</name>
<reference key="1">
    <citation type="journal article" date="2006" name="Genome Biol.">
        <title>Genomic analysis reveals that Pseudomonas aeruginosa virulence is combinatorial.</title>
        <authorList>
            <person name="Lee D.G."/>
            <person name="Urbach J.M."/>
            <person name="Wu G."/>
            <person name="Liberati N.T."/>
            <person name="Feinbaum R.L."/>
            <person name="Miyata S."/>
            <person name="Diggins L.T."/>
            <person name="He J."/>
            <person name="Saucier M."/>
            <person name="Deziel E."/>
            <person name="Friedman L."/>
            <person name="Li L."/>
            <person name="Grills G."/>
            <person name="Montgomery K."/>
            <person name="Kucherlapati R."/>
            <person name="Rahme L.G."/>
            <person name="Ausubel F.M."/>
        </authorList>
    </citation>
    <scope>NUCLEOTIDE SEQUENCE [LARGE SCALE GENOMIC DNA]</scope>
    <source>
        <strain>UCBPP-PA14</strain>
    </source>
</reference>
<reference key="2">
    <citation type="journal article" date="2014" name="Anal. Bioanal. Chem.">
        <title>Potential of liquid-isoelectric-focusing protein fractionation to improve phosphoprotein characterization of Pseudomonas aeruginosa PA14.</title>
        <authorList>
            <person name="Ouidir T."/>
            <person name="Jarnier F."/>
            <person name="Cosette P."/>
            <person name="Jouenne T."/>
            <person name="Hardouin J."/>
        </authorList>
    </citation>
    <scope>IDENTIFICATION BY MASS SPECTROMETRY</scope>
    <scope>PHOSPHORYLATION AT SER-123</scope>
    <source>
        <strain>UCBPP-PA14</strain>
    </source>
</reference>
<organism>
    <name type="scientific">Pseudomonas aeruginosa (strain UCBPP-PA14)</name>
    <dbReference type="NCBI Taxonomy" id="208963"/>
    <lineage>
        <taxon>Bacteria</taxon>
        <taxon>Pseudomonadati</taxon>
        <taxon>Pseudomonadota</taxon>
        <taxon>Gammaproteobacteria</taxon>
        <taxon>Pseudomonadales</taxon>
        <taxon>Pseudomonadaceae</taxon>
        <taxon>Pseudomonas</taxon>
    </lineage>
</organism>
<evidence type="ECO:0000255" key="1">
    <source>
        <dbReference type="HAMAP-Rule" id="MF_01334"/>
    </source>
</evidence>
<evidence type="ECO:0000269" key="2">
    <source>
    </source>
</evidence>
<evidence type="ECO:0000305" key="3"/>
<keyword id="KW-0597">Phosphoprotein</keyword>
<keyword id="KW-0687">Ribonucleoprotein</keyword>
<keyword id="KW-0689">Ribosomal protein</keyword>
<keyword id="KW-0694">RNA-binding</keyword>
<keyword id="KW-0699">rRNA-binding</keyword>
<protein>
    <recommendedName>
        <fullName evidence="1">Large ribosomal subunit protein bL25</fullName>
    </recommendedName>
    <alternativeName>
        <fullName evidence="3">50S ribosomal protein L25</fullName>
    </alternativeName>
    <alternativeName>
        <fullName evidence="1">General stress protein CTC</fullName>
    </alternativeName>
</protein>
<accession>Q02G03</accession>
<gene>
    <name evidence="1" type="primary">rplY</name>
    <name evidence="1" type="synonym">ctc</name>
    <name type="ordered locus">PA14_61780</name>
</gene>
<feature type="chain" id="PRO_1000052918" description="Large ribosomal subunit protein bL25">
    <location>
        <begin position="1"/>
        <end position="204"/>
    </location>
</feature>
<feature type="modified residue" description="Phosphoserine" evidence="2">
    <location>
        <position position="123"/>
    </location>
</feature>
<sequence>MVDFILNAQVRSDLGKGASRRLRRNAGLVPAVVYGGDKEPQSVTLELREIAKLLENEAAFSHVIALNVGGAKETVLIKALQRHPAKGFVMHADFLRVVADHKLTAHVPLHFINEEVAVGVKQSGGEISHTISEVEVSCLPKDLPEFIEVDMAKVELGQIVHLSDLKAPKGVELVQLAHGNDLAVANIHASRVVKEEGSEEGAAE</sequence>
<proteinExistence type="evidence at protein level"/>
<dbReference type="EMBL" id="CP000438">
    <property type="protein sequence ID" value="ABJ14052.1"/>
    <property type="molecule type" value="Genomic_DNA"/>
</dbReference>
<dbReference type="RefSeq" id="WP_003095013.1">
    <property type="nucleotide sequence ID" value="NZ_CP034244.1"/>
</dbReference>
<dbReference type="SMR" id="Q02G03"/>
<dbReference type="iPTMnet" id="Q02G03"/>
<dbReference type="KEGG" id="pau:PA14_61780"/>
<dbReference type="PseudoCAP" id="PA14_61780"/>
<dbReference type="HOGENOM" id="CLU_075939_0_1_6"/>
<dbReference type="BioCyc" id="PAER208963:G1G74-5223-MONOMER"/>
<dbReference type="Proteomes" id="UP000000653">
    <property type="component" value="Chromosome"/>
</dbReference>
<dbReference type="GO" id="GO:0022625">
    <property type="term" value="C:cytosolic large ribosomal subunit"/>
    <property type="evidence" value="ECO:0007669"/>
    <property type="project" value="TreeGrafter"/>
</dbReference>
<dbReference type="GO" id="GO:0008097">
    <property type="term" value="F:5S rRNA binding"/>
    <property type="evidence" value="ECO:0007669"/>
    <property type="project" value="InterPro"/>
</dbReference>
<dbReference type="GO" id="GO:0003735">
    <property type="term" value="F:structural constituent of ribosome"/>
    <property type="evidence" value="ECO:0007669"/>
    <property type="project" value="InterPro"/>
</dbReference>
<dbReference type="GO" id="GO:0006412">
    <property type="term" value="P:translation"/>
    <property type="evidence" value="ECO:0007669"/>
    <property type="project" value="UniProtKB-UniRule"/>
</dbReference>
<dbReference type="CDD" id="cd00495">
    <property type="entry name" value="Ribosomal_L25_TL5_CTC"/>
    <property type="match status" value="1"/>
</dbReference>
<dbReference type="FunFam" id="2.170.120.20:FF:000007">
    <property type="entry name" value="50S ribosomal protein L25"/>
    <property type="match status" value="1"/>
</dbReference>
<dbReference type="FunFam" id="2.40.240.10:FF:000022">
    <property type="entry name" value="50S ribosomal protein L25"/>
    <property type="match status" value="1"/>
</dbReference>
<dbReference type="Gene3D" id="2.170.120.20">
    <property type="entry name" value="Ribosomal protein L25, beta domain"/>
    <property type="match status" value="1"/>
</dbReference>
<dbReference type="Gene3D" id="2.40.240.10">
    <property type="entry name" value="Ribosomal Protein L25, Chain P"/>
    <property type="match status" value="1"/>
</dbReference>
<dbReference type="HAMAP" id="MF_01334">
    <property type="entry name" value="Ribosomal_bL25_CTC"/>
    <property type="match status" value="1"/>
</dbReference>
<dbReference type="InterPro" id="IPR020056">
    <property type="entry name" value="Rbsml_bL25/Gln-tRNA_synth_N"/>
</dbReference>
<dbReference type="InterPro" id="IPR011035">
    <property type="entry name" value="Ribosomal_bL25/Gln-tRNA_synth"/>
</dbReference>
<dbReference type="InterPro" id="IPR020057">
    <property type="entry name" value="Ribosomal_bL25_b-dom"/>
</dbReference>
<dbReference type="InterPro" id="IPR037121">
    <property type="entry name" value="Ribosomal_bL25_C"/>
</dbReference>
<dbReference type="InterPro" id="IPR001021">
    <property type="entry name" value="Ribosomal_bL25_long"/>
</dbReference>
<dbReference type="InterPro" id="IPR029751">
    <property type="entry name" value="Ribosomal_L25_dom"/>
</dbReference>
<dbReference type="InterPro" id="IPR020930">
    <property type="entry name" value="Ribosomal_uL5_bac-type"/>
</dbReference>
<dbReference type="NCBIfam" id="TIGR00731">
    <property type="entry name" value="bL25_bact_ctc"/>
    <property type="match status" value="1"/>
</dbReference>
<dbReference type="NCBIfam" id="NF004128">
    <property type="entry name" value="PRK05618.1-2"/>
    <property type="match status" value="1"/>
</dbReference>
<dbReference type="NCBIfam" id="NF004130">
    <property type="entry name" value="PRK05618.1-5"/>
    <property type="match status" value="1"/>
</dbReference>
<dbReference type="NCBIfam" id="NF004612">
    <property type="entry name" value="PRK05943.1"/>
    <property type="match status" value="1"/>
</dbReference>
<dbReference type="PANTHER" id="PTHR33284">
    <property type="entry name" value="RIBOSOMAL PROTEIN L25/GLN-TRNA SYNTHETASE, ANTI-CODON-BINDING DOMAIN-CONTAINING PROTEIN"/>
    <property type="match status" value="1"/>
</dbReference>
<dbReference type="PANTHER" id="PTHR33284:SF1">
    <property type="entry name" value="RIBOSOMAL PROTEIN L25_GLN-TRNA SYNTHETASE, ANTI-CODON-BINDING DOMAIN-CONTAINING PROTEIN"/>
    <property type="match status" value="1"/>
</dbReference>
<dbReference type="Pfam" id="PF01386">
    <property type="entry name" value="Ribosomal_L25p"/>
    <property type="match status" value="1"/>
</dbReference>
<dbReference type="Pfam" id="PF14693">
    <property type="entry name" value="Ribosomal_TL5_C"/>
    <property type="match status" value="1"/>
</dbReference>
<dbReference type="SUPFAM" id="SSF50715">
    <property type="entry name" value="Ribosomal protein L25-like"/>
    <property type="match status" value="1"/>
</dbReference>
<comment type="function">
    <text evidence="1">This is one of the proteins that binds to the 5S RNA in the ribosome where it forms part of the central protuberance.</text>
</comment>
<comment type="subunit">
    <text evidence="1">Part of the 50S ribosomal subunit; part of the 5S rRNA/L5/L18/L25 subcomplex. Contacts the 5S rRNA. Binds to the 5S rRNA independently of L5 and L18.</text>
</comment>
<comment type="similarity">
    <text evidence="1">Belongs to the bacterial ribosomal protein bL25 family. CTC subfamily.</text>
</comment>